<dbReference type="EC" id="6.1.1.1" evidence="1"/>
<dbReference type="EMBL" id="AM421808">
    <property type="protein sequence ID" value="CAM09690.1"/>
    <property type="molecule type" value="Genomic_DNA"/>
</dbReference>
<dbReference type="RefSeq" id="WP_002221502.1">
    <property type="nucleotide sequence ID" value="NC_008767.1"/>
</dbReference>
<dbReference type="SMR" id="A1KS60"/>
<dbReference type="KEGG" id="nmc:NMC0381"/>
<dbReference type="HOGENOM" id="CLU_024003_0_3_4"/>
<dbReference type="Proteomes" id="UP000002286">
    <property type="component" value="Chromosome"/>
</dbReference>
<dbReference type="GO" id="GO:0005829">
    <property type="term" value="C:cytosol"/>
    <property type="evidence" value="ECO:0007669"/>
    <property type="project" value="TreeGrafter"/>
</dbReference>
<dbReference type="GO" id="GO:0005524">
    <property type="term" value="F:ATP binding"/>
    <property type="evidence" value="ECO:0007669"/>
    <property type="project" value="UniProtKB-UniRule"/>
</dbReference>
<dbReference type="GO" id="GO:0003723">
    <property type="term" value="F:RNA binding"/>
    <property type="evidence" value="ECO:0007669"/>
    <property type="project" value="UniProtKB-KW"/>
</dbReference>
<dbReference type="GO" id="GO:0004831">
    <property type="term" value="F:tyrosine-tRNA ligase activity"/>
    <property type="evidence" value="ECO:0007669"/>
    <property type="project" value="UniProtKB-UniRule"/>
</dbReference>
<dbReference type="GO" id="GO:0006437">
    <property type="term" value="P:tyrosyl-tRNA aminoacylation"/>
    <property type="evidence" value="ECO:0007669"/>
    <property type="project" value="UniProtKB-UniRule"/>
</dbReference>
<dbReference type="CDD" id="cd00805">
    <property type="entry name" value="TyrRS_core"/>
    <property type="match status" value="1"/>
</dbReference>
<dbReference type="FunFam" id="1.10.240.10:FF:000001">
    <property type="entry name" value="Tyrosine--tRNA ligase"/>
    <property type="match status" value="1"/>
</dbReference>
<dbReference type="FunFam" id="3.10.290.10:FF:000027">
    <property type="entry name" value="Tyrosine--tRNA ligase"/>
    <property type="match status" value="1"/>
</dbReference>
<dbReference type="FunFam" id="3.40.50.620:FF:000008">
    <property type="entry name" value="Tyrosine--tRNA ligase"/>
    <property type="match status" value="1"/>
</dbReference>
<dbReference type="Gene3D" id="3.40.50.620">
    <property type="entry name" value="HUPs"/>
    <property type="match status" value="1"/>
</dbReference>
<dbReference type="Gene3D" id="3.10.290.10">
    <property type="entry name" value="RNA-binding S4 domain"/>
    <property type="match status" value="1"/>
</dbReference>
<dbReference type="Gene3D" id="1.10.240.10">
    <property type="entry name" value="Tyrosyl-Transfer RNA Synthetase"/>
    <property type="match status" value="1"/>
</dbReference>
<dbReference type="HAMAP" id="MF_02006">
    <property type="entry name" value="Tyr_tRNA_synth_type1"/>
    <property type="match status" value="1"/>
</dbReference>
<dbReference type="InterPro" id="IPR001412">
    <property type="entry name" value="aa-tRNA-synth_I_CS"/>
</dbReference>
<dbReference type="InterPro" id="IPR002305">
    <property type="entry name" value="aa-tRNA-synth_Ic"/>
</dbReference>
<dbReference type="InterPro" id="IPR014729">
    <property type="entry name" value="Rossmann-like_a/b/a_fold"/>
</dbReference>
<dbReference type="InterPro" id="IPR036986">
    <property type="entry name" value="S4_RNA-bd_sf"/>
</dbReference>
<dbReference type="InterPro" id="IPR054608">
    <property type="entry name" value="SYY-like_C"/>
</dbReference>
<dbReference type="InterPro" id="IPR002307">
    <property type="entry name" value="Tyr-tRNA-ligase"/>
</dbReference>
<dbReference type="InterPro" id="IPR024088">
    <property type="entry name" value="Tyr-tRNA-ligase_bac-type"/>
</dbReference>
<dbReference type="InterPro" id="IPR024107">
    <property type="entry name" value="Tyr-tRNA-ligase_bac_1"/>
</dbReference>
<dbReference type="NCBIfam" id="TIGR00234">
    <property type="entry name" value="tyrS"/>
    <property type="match status" value="1"/>
</dbReference>
<dbReference type="PANTHER" id="PTHR11766:SF0">
    <property type="entry name" value="TYROSINE--TRNA LIGASE, MITOCHONDRIAL"/>
    <property type="match status" value="1"/>
</dbReference>
<dbReference type="PANTHER" id="PTHR11766">
    <property type="entry name" value="TYROSYL-TRNA SYNTHETASE"/>
    <property type="match status" value="1"/>
</dbReference>
<dbReference type="Pfam" id="PF22421">
    <property type="entry name" value="SYY_C-terminal"/>
    <property type="match status" value="1"/>
</dbReference>
<dbReference type="Pfam" id="PF00579">
    <property type="entry name" value="tRNA-synt_1b"/>
    <property type="match status" value="1"/>
</dbReference>
<dbReference type="PRINTS" id="PR01040">
    <property type="entry name" value="TRNASYNTHTYR"/>
</dbReference>
<dbReference type="SUPFAM" id="SSF55174">
    <property type="entry name" value="Alpha-L RNA-binding motif"/>
    <property type="match status" value="1"/>
</dbReference>
<dbReference type="SUPFAM" id="SSF52374">
    <property type="entry name" value="Nucleotidylyl transferase"/>
    <property type="match status" value="1"/>
</dbReference>
<dbReference type="PROSITE" id="PS00178">
    <property type="entry name" value="AA_TRNA_LIGASE_I"/>
    <property type="match status" value="1"/>
</dbReference>
<dbReference type="PROSITE" id="PS50889">
    <property type="entry name" value="S4"/>
    <property type="match status" value="1"/>
</dbReference>
<name>SYY_NEIMF</name>
<sequence length="431" mass="47310">MSVIQDLQSRGLIAQTTDIEALDALLNEQKISLYCGFDPTADSLHIGHLLPVLALRRFQQAGHTPIALVGGATGMIGDPSFKAAERSLNSAETVAGWVESIRSQLTPFLSFEGGNAAIMANNADWFGKMNCLDFLRDIGKHFSVNAMLNKESVKQRIDRDGAGISFTEFAYSLLQGYDFAELNKRHGAVLEIGGSDQWGNITAGIDLTRRLYQKQVFGLTLPLVTKSDGTKFGKTEGGAVWLNAKKTSPYQFYQFWLKVADADVYKFLKYFTFLSIEEIDAIEAKDKASGSKPEAQRILAEEMTRLIHGEEALAAAQRISESLFAEDQSSLTESDFEQLALDGLPAFEVSDGINVVEALVKTGLASSNKEARGFVNSKAVLLNGKPAEANNPNHAAERPDDACLLNGEHKRFGKYTILRRGKRNHALLVWK</sequence>
<proteinExistence type="inferred from homology"/>
<comment type="function">
    <text evidence="1">Catalyzes the attachment of tyrosine to tRNA(Tyr) in a two-step reaction: tyrosine is first activated by ATP to form Tyr-AMP and then transferred to the acceptor end of tRNA(Tyr).</text>
</comment>
<comment type="catalytic activity">
    <reaction evidence="1">
        <text>tRNA(Tyr) + L-tyrosine + ATP = L-tyrosyl-tRNA(Tyr) + AMP + diphosphate + H(+)</text>
        <dbReference type="Rhea" id="RHEA:10220"/>
        <dbReference type="Rhea" id="RHEA-COMP:9706"/>
        <dbReference type="Rhea" id="RHEA-COMP:9707"/>
        <dbReference type="ChEBI" id="CHEBI:15378"/>
        <dbReference type="ChEBI" id="CHEBI:30616"/>
        <dbReference type="ChEBI" id="CHEBI:33019"/>
        <dbReference type="ChEBI" id="CHEBI:58315"/>
        <dbReference type="ChEBI" id="CHEBI:78442"/>
        <dbReference type="ChEBI" id="CHEBI:78536"/>
        <dbReference type="ChEBI" id="CHEBI:456215"/>
        <dbReference type="EC" id="6.1.1.1"/>
    </reaction>
</comment>
<comment type="subunit">
    <text evidence="1">Homodimer.</text>
</comment>
<comment type="subcellular location">
    <subcellularLocation>
        <location evidence="1">Cytoplasm</location>
    </subcellularLocation>
</comment>
<comment type="similarity">
    <text evidence="1">Belongs to the class-I aminoacyl-tRNA synthetase family. TyrS type 1 subfamily.</text>
</comment>
<protein>
    <recommendedName>
        <fullName evidence="1">Tyrosine--tRNA ligase</fullName>
        <ecNumber evidence="1">6.1.1.1</ecNumber>
    </recommendedName>
    <alternativeName>
        <fullName evidence="1">Tyrosyl-tRNA synthetase</fullName>
        <shortName evidence="1">TyrRS</shortName>
    </alternativeName>
</protein>
<keyword id="KW-0030">Aminoacyl-tRNA synthetase</keyword>
<keyword id="KW-0067">ATP-binding</keyword>
<keyword id="KW-0963">Cytoplasm</keyword>
<keyword id="KW-0436">Ligase</keyword>
<keyword id="KW-0547">Nucleotide-binding</keyword>
<keyword id="KW-0648">Protein biosynthesis</keyword>
<keyword id="KW-0694">RNA-binding</keyword>
<organism>
    <name type="scientific">Neisseria meningitidis serogroup C / serotype 2a (strain ATCC 700532 / DSM 15464 / FAM18)</name>
    <dbReference type="NCBI Taxonomy" id="272831"/>
    <lineage>
        <taxon>Bacteria</taxon>
        <taxon>Pseudomonadati</taxon>
        <taxon>Pseudomonadota</taxon>
        <taxon>Betaproteobacteria</taxon>
        <taxon>Neisseriales</taxon>
        <taxon>Neisseriaceae</taxon>
        <taxon>Neisseria</taxon>
    </lineage>
</organism>
<gene>
    <name evidence="1" type="primary">tyrS</name>
    <name type="ordered locus">NMC0381</name>
</gene>
<accession>A1KS60</accession>
<evidence type="ECO:0000255" key="1">
    <source>
        <dbReference type="HAMAP-Rule" id="MF_02006"/>
    </source>
</evidence>
<reference key="1">
    <citation type="journal article" date="2007" name="PLoS Genet.">
        <title>Meningococcal genetic variation mechanisms viewed through comparative analysis of serogroup C strain FAM18.</title>
        <authorList>
            <person name="Bentley S.D."/>
            <person name="Vernikos G.S."/>
            <person name="Snyder L.A.S."/>
            <person name="Churcher C."/>
            <person name="Arrowsmith C."/>
            <person name="Chillingworth T."/>
            <person name="Cronin A."/>
            <person name="Davis P.H."/>
            <person name="Holroyd N.E."/>
            <person name="Jagels K."/>
            <person name="Maddison M."/>
            <person name="Moule S."/>
            <person name="Rabbinowitsch E."/>
            <person name="Sharp S."/>
            <person name="Unwin L."/>
            <person name="Whitehead S."/>
            <person name="Quail M.A."/>
            <person name="Achtman M."/>
            <person name="Barrell B.G."/>
            <person name="Saunders N.J."/>
            <person name="Parkhill J."/>
        </authorList>
    </citation>
    <scope>NUCLEOTIDE SEQUENCE [LARGE SCALE GENOMIC DNA]</scope>
    <source>
        <strain>ATCC 700532 / DSM 15464 / FAM18</strain>
    </source>
</reference>
<feature type="chain" id="PRO_1000088605" description="Tyrosine--tRNA ligase">
    <location>
        <begin position="1"/>
        <end position="431"/>
    </location>
</feature>
<feature type="domain" description="S4 RNA-binding" evidence="1">
    <location>
        <begin position="353"/>
        <end position="422"/>
    </location>
</feature>
<feature type="short sequence motif" description="'HIGH' region">
    <location>
        <begin position="39"/>
        <end position="48"/>
    </location>
</feature>
<feature type="short sequence motif" description="'KMSKS' region">
    <location>
        <begin position="231"/>
        <end position="235"/>
    </location>
</feature>
<feature type="binding site" evidence="1">
    <location>
        <position position="34"/>
    </location>
    <ligand>
        <name>L-tyrosine</name>
        <dbReference type="ChEBI" id="CHEBI:58315"/>
    </ligand>
</feature>
<feature type="binding site" evidence="1">
    <location>
        <position position="171"/>
    </location>
    <ligand>
        <name>L-tyrosine</name>
        <dbReference type="ChEBI" id="CHEBI:58315"/>
    </ligand>
</feature>
<feature type="binding site" evidence="1">
    <location>
        <position position="175"/>
    </location>
    <ligand>
        <name>L-tyrosine</name>
        <dbReference type="ChEBI" id="CHEBI:58315"/>
    </ligand>
</feature>
<feature type="binding site" evidence="1">
    <location>
        <position position="234"/>
    </location>
    <ligand>
        <name>ATP</name>
        <dbReference type="ChEBI" id="CHEBI:30616"/>
    </ligand>
</feature>